<sequence>MTDSRYIGRFAPSPSGELHFGSLIAALGSYLQARANQGIWRVRIEDIDPPREVPGAADTILRQLDHYGLHWDGDVLWQSQRHEAYREALAWLGEQGLSYYCTCTRARIHAVGGIYDGHCRDLGLGAENAALRLRQTRPVLQFTDRLHGTLIANEPLAREDFIIHRRDGLFAYNLAVVVDDHFQGITEIVRGADLIEPTVRQISLYQHFGWQAPDYLHLPLALNADGNKLSKQNHAPALPEGDPRPEIVRALRFLNQDIAQDWQALSMDDLLSQAVANWQPAKIEHSQMAPAEL</sequence>
<gene>
    <name evidence="1" type="primary">gluQ</name>
    <name type="ordered locus">KPK_4592</name>
</gene>
<reference key="1">
    <citation type="journal article" date="2008" name="PLoS Genet.">
        <title>Complete genome sequence of the N2-fixing broad host range endophyte Klebsiella pneumoniae 342 and virulence predictions verified in mice.</title>
        <authorList>
            <person name="Fouts D.E."/>
            <person name="Tyler H.L."/>
            <person name="DeBoy R.T."/>
            <person name="Daugherty S."/>
            <person name="Ren Q."/>
            <person name="Badger J.H."/>
            <person name="Durkin A.S."/>
            <person name="Huot H."/>
            <person name="Shrivastava S."/>
            <person name="Kothari S."/>
            <person name="Dodson R.J."/>
            <person name="Mohamoud Y."/>
            <person name="Khouri H."/>
            <person name="Roesch L.F.W."/>
            <person name="Krogfelt K.A."/>
            <person name="Struve C."/>
            <person name="Triplett E.W."/>
            <person name="Methe B.A."/>
        </authorList>
    </citation>
    <scope>NUCLEOTIDE SEQUENCE [LARGE SCALE GENOMIC DNA]</scope>
    <source>
        <strain>342</strain>
    </source>
</reference>
<evidence type="ECO:0000255" key="1">
    <source>
        <dbReference type="HAMAP-Rule" id="MF_01428"/>
    </source>
</evidence>
<feature type="chain" id="PRO_1000145741" description="Glutamyl-Q tRNA(Asp) synthetase">
    <location>
        <begin position="1"/>
        <end position="293"/>
    </location>
</feature>
<feature type="short sequence motif" description="'HIGH' region">
    <location>
        <begin position="12"/>
        <end position="22"/>
    </location>
</feature>
<feature type="short sequence motif" description="'KMSKS' region">
    <location>
        <begin position="228"/>
        <end position="232"/>
    </location>
</feature>
<feature type="binding site" evidence="1">
    <location>
        <begin position="9"/>
        <end position="13"/>
    </location>
    <ligand>
        <name>L-glutamate</name>
        <dbReference type="ChEBI" id="CHEBI:29985"/>
    </ligand>
</feature>
<feature type="binding site" evidence="1">
    <location>
        <position position="45"/>
    </location>
    <ligand>
        <name>L-glutamate</name>
        <dbReference type="ChEBI" id="CHEBI:29985"/>
    </ligand>
</feature>
<feature type="binding site" evidence="1">
    <location>
        <position position="101"/>
    </location>
    <ligand>
        <name>Zn(2+)</name>
        <dbReference type="ChEBI" id="CHEBI:29105"/>
    </ligand>
</feature>
<feature type="binding site" evidence="1">
    <location>
        <position position="103"/>
    </location>
    <ligand>
        <name>Zn(2+)</name>
        <dbReference type="ChEBI" id="CHEBI:29105"/>
    </ligand>
</feature>
<feature type="binding site" evidence="1">
    <location>
        <position position="115"/>
    </location>
    <ligand>
        <name>Zn(2+)</name>
        <dbReference type="ChEBI" id="CHEBI:29105"/>
    </ligand>
</feature>
<feature type="binding site" evidence="1">
    <location>
        <position position="119"/>
    </location>
    <ligand>
        <name>Zn(2+)</name>
        <dbReference type="ChEBI" id="CHEBI:29105"/>
    </ligand>
</feature>
<feature type="binding site" evidence="1">
    <location>
        <position position="172"/>
    </location>
    <ligand>
        <name>L-glutamate</name>
        <dbReference type="ChEBI" id="CHEBI:29985"/>
    </ligand>
</feature>
<feature type="binding site" evidence="1">
    <location>
        <position position="190"/>
    </location>
    <ligand>
        <name>L-glutamate</name>
        <dbReference type="ChEBI" id="CHEBI:29985"/>
    </ligand>
</feature>
<feature type="binding site" evidence="1">
    <location>
        <position position="231"/>
    </location>
    <ligand>
        <name>ATP</name>
        <dbReference type="ChEBI" id="CHEBI:30616"/>
    </ligand>
</feature>
<protein>
    <recommendedName>
        <fullName evidence="1">Glutamyl-Q tRNA(Asp) synthetase</fullName>
        <shortName evidence="1">Glu-Q-RSs</shortName>
        <ecNumber evidence="1">6.1.1.-</ecNumber>
    </recommendedName>
</protein>
<accession>B5Y1P2</accession>
<proteinExistence type="inferred from homology"/>
<keyword id="KW-0030">Aminoacyl-tRNA synthetase</keyword>
<keyword id="KW-0067">ATP-binding</keyword>
<keyword id="KW-0436">Ligase</keyword>
<keyword id="KW-0479">Metal-binding</keyword>
<keyword id="KW-0547">Nucleotide-binding</keyword>
<keyword id="KW-0862">Zinc</keyword>
<organism>
    <name type="scientific">Klebsiella pneumoniae (strain 342)</name>
    <dbReference type="NCBI Taxonomy" id="507522"/>
    <lineage>
        <taxon>Bacteria</taxon>
        <taxon>Pseudomonadati</taxon>
        <taxon>Pseudomonadota</taxon>
        <taxon>Gammaproteobacteria</taxon>
        <taxon>Enterobacterales</taxon>
        <taxon>Enterobacteriaceae</taxon>
        <taxon>Klebsiella/Raoultella group</taxon>
        <taxon>Klebsiella</taxon>
        <taxon>Klebsiella pneumoniae complex</taxon>
    </lineage>
</organism>
<name>GLUQ_KLEP3</name>
<comment type="function">
    <text evidence="1">Catalyzes the tRNA-independent activation of glutamate in presence of ATP and the subsequent transfer of glutamate onto a tRNA(Asp). Glutamate is transferred on the 2-amino-5-(4,5-dihydroxy-2-cyclopenten-1-yl) moiety of the queuosine in the wobble position of the QUC anticodon.</text>
</comment>
<comment type="cofactor">
    <cofactor evidence="1">
        <name>Zn(2+)</name>
        <dbReference type="ChEBI" id="CHEBI:29105"/>
    </cofactor>
    <text evidence="1">Binds 1 zinc ion per subunit.</text>
</comment>
<comment type="similarity">
    <text evidence="1">Belongs to the class-I aminoacyl-tRNA synthetase family. GluQ subfamily.</text>
</comment>
<dbReference type="EC" id="6.1.1.-" evidence="1"/>
<dbReference type="EMBL" id="CP000964">
    <property type="protein sequence ID" value="ACI08023.1"/>
    <property type="molecule type" value="Genomic_DNA"/>
</dbReference>
<dbReference type="SMR" id="B5Y1P2"/>
<dbReference type="KEGG" id="kpe:KPK_4592"/>
<dbReference type="HOGENOM" id="CLU_015768_0_1_6"/>
<dbReference type="Proteomes" id="UP000001734">
    <property type="component" value="Chromosome"/>
</dbReference>
<dbReference type="GO" id="GO:0005829">
    <property type="term" value="C:cytosol"/>
    <property type="evidence" value="ECO:0007669"/>
    <property type="project" value="TreeGrafter"/>
</dbReference>
<dbReference type="GO" id="GO:0005524">
    <property type="term" value="F:ATP binding"/>
    <property type="evidence" value="ECO:0007669"/>
    <property type="project" value="UniProtKB-KW"/>
</dbReference>
<dbReference type="GO" id="GO:0004818">
    <property type="term" value="F:glutamate-tRNA ligase activity"/>
    <property type="evidence" value="ECO:0007669"/>
    <property type="project" value="TreeGrafter"/>
</dbReference>
<dbReference type="GO" id="GO:0008270">
    <property type="term" value="F:zinc ion binding"/>
    <property type="evidence" value="ECO:0007669"/>
    <property type="project" value="UniProtKB-UniRule"/>
</dbReference>
<dbReference type="GO" id="GO:0006424">
    <property type="term" value="P:glutamyl-tRNA aminoacylation"/>
    <property type="evidence" value="ECO:0007669"/>
    <property type="project" value="InterPro"/>
</dbReference>
<dbReference type="GO" id="GO:0006400">
    <property type="term" value="P:tRNA modification"/>
    <property type="evidence" value="ECO:0007669"/>
    <property type="project" value="InterPro"/>
</dbReference>
<dbReference type="FunFam" id="3.40.50.620:FF:000093">
    <property type="entry name" value="Glutamyl-Q tRNA(Asp) synthetase"/>
    <property type="match status" value="1"/>
</dbReference>
<dbReference type="Gene3D" id="3.40.50.620">
    <property type="entry name" value="HUPs"/>
    <property type="match status" value="1"/>
</dbReference>
<dbReference type="HAMAP" id="MF_01428">
    <property type="entry name" value="Glu_Q_tRNA_synth"/>
    <property type="match status" value="1"/>
</dbReference>
<dbReference type="InterPro" id="IPR022380">
    <property type="entry name" value="Glu-Q_tRNA(Asp)_Synthase"/>
</dbReference>
<dbReference type="InterPro" id="IPR000924">
    <property type="entry name" value="Glu/Gln-tRNA-synth"/>
</dbReference>
<dbReference type="InterPro" id="IPR020058">
    <property type="entry name" value="Glu/Gln-tRNA-synth_Ib_cat-dom"/>
</dbReference>
<dbReference type="InterPro" id="IPR049940">
    <property type="entry name" value="GluQ/Sye"/>
</dbReference>
<dbReference type="InterPro" id="IPR014729">
    <property type="entry name" value="Rossmann-like_a/b/a_fold"/>
</dbReference>
<dbReference type="NCBIfam" id="NF004312">
    <property type="entry name" value="PRK05710.1-1"/>
    <property type="match status" value="1"/>
</dbReference>
<dbReference type="NCBIfam" id="NF004314">
    <property type="entry name" value="PRK05710.1-3"/>
    <property type="match status" value="1"/>
</dbReference>
<dbReference type="NCBIfam" id="TIGR03838">
    <property type="entry name" value="queuosine_YadB"/>
    <property type="match status" value="1"/>
</dbReference>
<dbReference type="PANTHER" id="PTHR43311">
    <property type="entry name" value="GLUTAMATE--TRNA LIGASE"/>
    <property type="match status" value="1"/>
</dbReference>
<dbReference type="PANTHER" id="PTHR43311:SF1">
    <property type="entry name" value="GLUTAMYL-Q TRNA(ASP) SYNTHETASE"/>
    <property type="match status" value="1"/>
</dbReference>
<dbReference type="Pfam" id="PF00749">
    <property type="entry name" value="tRNA-synt_1c"/>
    <property type="match status" value="1"/>
</dbReference>
<dbReference type="PRINTS" id="PR00987">
    <property type="entry name" value="TRNASYNTHGLU"/>
</dbReference>
<dbReference type="SUPFAM" id="SSF52374">
    <property type="entry name" value="Nucleotidylyl transferase"/>
    <property type="match status" value="1"/>
</dbReference>